<comment type="function">
    <text evidence="1">Catalyzes the reversible phosphatidyl group transfer from one phosphatidylglycerol molecule to another to form cardiolipin (CL) (diphosphatidylglycerol) and glycerol.</text>
</comment>
<comment type="catalytic activity">
    <reaction evidence="1">
        <text>2 a 1,2-diacyl-sn-glycero-3-phospho-(1'-sn-glycerol) = a cardiolipin + glycerol</text>
        <dbReference type="Rhea" id="RHEA:31451"/>
        <dbReference type="ChEBI" id="CHEBI:17754"/>
        <dbReference type="ChEBI" id="CHEBI:62237"/>
        <dbReference type="ChEBI" id="CHEBI:64716"/>
    </reaction>
</comment>
<comment type="subcellular location">
    <subcellularLocation>
        <location evidence="1">Cell inner membrane</location>
        <topology evidence="1">Multi-pass membrane protein</topology>
    </subcellularLocation>
</comment>
<comment type="similarity">
    <text evidence="1">Belongs to the phospholipase D family. Cardiolipin synthase subfamily. ClsA sub-subfamily.</text>
</comment>
<organism>
    <name type="scientific">Yersinia pseudotuberculosis serotype O:3 (strain YPIII)</name>
    <dbReference type="NCBI Taxonomy" id="502800"/>
    <lineage>
        <taxon>Bacteria</taxon>
        <taxon>Pseudomonadati</taxon>
        <taxon>Pseudomonadota</taxon>
        <taxon>Gammaproteobacteria</taxon>
        <taxon>Enterobacterales</taxon>
        <taxon>Yersiniaceae</taxon>
        <taxon>Yersinia</taxon>
    </lineage>
</organism>
<sequence>MTTFYTVISWLSVFGYWLLIAGVTLRILMKRRAVPSAMAWLLIIYILPLVGIIAYLSFGELHLGKRRAERAKAMWPSTARWLSELKECQHIFANSNSEVASPLFQLCERRQGINGVKGNQLQLLTTTDDTLKALVRDIELARHNIEMVFYIWQPGGLVDQVAESLMAAARRGVHCRLLLDSAGSKQFFRSPYPAMMRNAGIEVVEALKVNVFRMFLRRMDLRQHRKIVLIDNYVAYTGSMNMVDPRFFKQDAGVGQWIDMMARMEGPVATTLGIVYACDWEIETGKRILPPPPDANIMPFEEETGHTIQVIASGPGFPEEMIHQALLTAVYAAREQLIMTTPYFVPSDDLLHAICTAAQRGVDVSIIVPRENDSMMVRWASRAFFTELLNAGVKIYQFEGGLLHSKSVLVDGQLSLVGTVNLDMRSLWLNFEITLVIDDDGFGADLAQVQDDYIARSALLDGELWNKRPLWHRVTERLFYFFSPLL</sequence>
<reference key="1">
    <citation type="submission" date="2008-02" db="EMBL/GenBank/DDBJ databases">
        <title>Complete sequence of Yersinia pseudotuberculosis YPIII.</title>
        <authorList>
            <consortium name="US DOE Joint Genome Institute"/>
            <person name="Copeland A."/>
            <person name="Lucas S."/>
            <person name="Lapidus A."/>
            <person name="Glavina del Rio T."/>
            <person name="Dalin E."/>
            <person name="Tice H."/>
            <person name="Bruce D."/>
            <person name="Goodwin L."/>
            <person name="Pitluck S."/>
            <person name="Munk A.C."/>
            <person name="Brettin T."/>
            <person name="Detter J.C."/>
            <person name="Han C."/>
            <person name="Tapia R."/>
            <person name="Schmutz J."/>
            <person name="Larimer F."/>
            <person name="Land M."/>
            <person name="Hauser L."/>
            <person name="Challacombe J.F."/>
            <person name="Green L."/>
            <person name="Lindler L.E."/>
            <person name="Nikolich M.P."/>
            <person name="Richardson P."/>
        </authorList>
    </citation>
    <scope>NUCLEOTIDE SEQUENCE [LARGE SCALE GENOMIC DNA]</scope>
    <source>
        <strain>YPIII</strain>
    </source>
</reference>
<accession>B1JKT9</accession>
<dbReference type="EC" id="2.7.8.-" evidence="1"/>
<dbReference type="EMBL" id="CP000950">
    <property type="protein sequence ID" value="ACA68350.1"/>
    <property type="molecule type" value="Genomic_DNA"/>
</dbReference>
<dbReference type="RefSeq" id="WP_012304089.1">
    <property type="nucleotide sequence ID" value="NZ_CP009792.1"/>
</dbReference>
<dbReference type="SMR" id="B1JKT9"/>
<dbReference type="GeneID" id="49785893"/>
<dbReference type="KEGG" id="ypy:YPK_2063"/>
<dbReference type="PATRIC" id="fig|502800.11.peg.2741"/>
<dbReference type="GO" id="GO:0005886">
    <property type="term" value="C:plasma membrane"/>
    <property type="evidence" value="ECO:0007669"/>
    <property type="project" value="UniProtKB-SubCell"/>
</dbReference>
<dbReference type="GO" id="GO:0008808">
    <property type="term" value="F:cardiolipin synthase activity"/>
    <property type="evidence" value="ECO:0007669"/>
    <property type="project" value="InterPro"/>
</dbReference>
<dbReference type="GO" id="GO:0032049">
    <property type="term" value="P:cardiolipin biosynthetic process"/>
    <property type="evidence" value="ECO:0007669"/>
    <property type="project" value="InterPro"/>
</dbReference>
<dbReference type="CDD" id="cd09152">
    <property type="entry name" value="PLDc_EcCLS_like_1"/>
    <property type="match status" value="1"/>
</dbReference>
<dbReference type="CDD" id="cd09158">
    <property type="entry name" value="PLDc_EcCLS_like_2"/>
    <property type="match status" value="1"/>
</dbReference>
<dbReference type="FunFam" id="3.30.870.10:FF:000002">
    <property type="entry name" value="Cardiolipin synthase A"/>
    <property type="match status" value="1"/>
</dbReference>
<dbReference type="FunFam" id="3.30.870.10:FF:000003">
    <property type="entry name" value="Cardiolipin synthase A"/>
    <property type="match status" value="1"/>
</dbReference>
<dbReference type="Gene3D" id="3.30.870.10">
    <property type="entry name" value="Endonuclease Chain A"/>
    <property type="match status" value="2"/>
</dbReference>
<dbReference type="HAMAP" id="MF_00190">
    <property type="entry name" value="Cardiolipin_synth_ClsA"/>
    <property type="match status" value="1"/>
</dbReference>
<dbReference type="InterPro" id="IPR022924">
    <property type="entry name" value="Cardiolipin_synthase"/>
</dbReference>
<dbReference type="InterPro" id="IPR030840">
    <property type="entry name" value="CL_synthase_A"/>
</dbReference>
<dbReference type="InterPro" id="IPR027379">
    <property type="entry name" value="CLS_N"/>
</dbReference>
<dbReference type="InterPro" id="IPR025202">
    <property type="entry name" value="PLD-like_dom"/>
</dbReference>
<dbReference type="InterPro" id="IPR001736">
    <property type="entry name" value="PLipase_D/transphosphatidylase"/>
</dbReference>
<dbReference type="NCBIfam" id="TIGR04265">
    <property type="entry name" value="bac_cardiolipin"/>
    <property type="match status" value="1"/>
</dbReference>
<dbReference type="PANTHER" id="PTHR21248">
    <property type="entry name" value="CARDIOLIPIN SYNTHASE"/>
    <property type="match status" value="1"/>
</dbReference>
<dbReference type="PANTHER" id="PTHR21248:SF22">
    <property type="entry name" value="PHOSPHOLIPASE D"/>
    <property type="match status" value="1"/>
</dbReference>
<dbReference type="Pfam" id="PF13091">
    <property type="entry name" value="PLDc_2"/>
    <property type="match status" value="2"/>
</dbReference>
<dbReference type="Pfam" id="PF13396">
    <property type="entry name" value="PLDc_N"/>
    <property type="match status" value="1"/>
</dbReference>
<dbReference type="SMART" id="SM00155">
    <property type="entry name" value="PLDc"/>
    <property type="match status" value="2"/>
</dbReference>
<dbReference type="SUPFAM" id="SSF56024">
    <property type="entry name" value="Phospholipase D/nuclease"/>
    <property type="match status" value="2"/>
</dbReference>
<dbReference type="PROSITE" id="PS50035">
    <property type="entry name" value="PLD"/>
    <property type="match status" value="2"/>
</dbReference>
<name>CLSA_YERPY</name>
<gene>
    <name evidence="1" type="primary">clsA</name>
    <name type="synonym">cls</name>
    <name type="ordered locus">YPK_2063</name>
</gene>
<feature type="chain" id="PRO_1000098922" description="Cardiolipin synthase A">
    <location>
        <begin position="1"/>
        <end position="486"/>
    </location>
</feature>
<feature type="transmembrane region" description="Helical" evidence="1">
    <location>
        <begin position="3"/>
        <end position="23"/>
    </location>
</feature>
<feature type="transmembrane region" description="Helical" evidence="1">
    <location>
        <begin position="38"/>
        <end position="58"/>
    </location>
</feature>
<feature type="domain" description="PLD phosphodiesterase 1" evidence="1">
    <location>
        <begin position="219"/>
        <end position="246"/>
    </location>
</feature>
<feature type="domain" description="PLD phosphodiesterase 2" evidence="1">
    <location>
        <begin position="399"/>
        <end position="426"/>
    </location>
</feature>
<feature type="active site" evidence="1">
    <location>
        <position position="224"/>
    </location>
</feature>
<feature type="active site" evidence="1">
    <location>
        <position position="226"/>
    </location>
</feature>
<feature type="active site" evidence="1">
    <location>
        <position position="231"/>
    </location>
</feature>
<feature type="active site" evidence="1">
    <location>
        <position position="404"/>
    </location>
</feature>
<feature type="active site" evidence="1">
    <location>
        <position position="406"/>
    </location>
</feature>
<feature type="active site" evidence="1">
    <location>
        <position position="411"/>
    </location>
</feature>
<keyword id="KW-0997">Cell inner membrane</keyword>
<keyword id="KW-1003">Cell membrane</keyword>
<keyword id="KW-0444">Lipid biosynthesis</keyword>
<keyword id="KW-0443">Lipid metabolism</keyword>
<keyword id="KW-0472">Membrane</keyword>
<keyword id="KW-0594">Phospholipid biosynthesis</keyword>
<keyword id="KW-1208">Phospholipid metabolism</keyword>
<keyword id="KW-0677">Repeat</keyword>
<keyword id="KW-0808">Transferase</keyword>
<keyword id="KW-0812">Transmembrane</keyword>
<keyword id="KW-1133">Transmembrane helix</keyword>
<protein>
    <recommendedName>
        <fullName evidence="1">Cardiolipin synthase A</fullName>
        <shortName evidence="1">CL synthase</shortName>
        <ecNumber evidence="1">2.7.8.-</ecNumber>
    </recommendedName>
</protein>
<evidence type="ECO:0000255" key="1">
    <source>
        <dbReference type="HAMAP-Rule" id="MF_00190"/>
    </source>
</evidence>
<proteinExistence type="inferred from homology"/>